<proteinExistence type="inferred from homology"/>
<organism>
    <name type="scientific">Rotavirus X (strain RVX/Human/China/NADRV-J19/1997/GXP[X])</name>
    <name type="common">RV ADRV-N</name>
    <name type="synonym">Rotavirus (isolate novel adult diarrhea rotavirus-J19)</name>
    <dbReference type="NCBI Taxonomy" id="335103"/>
    <lineage>
        <taxon>Viruses</taxon>
        <taxon>Riboviria</taxon>
        <taxon>Orthornavirae</taxon>
        <taxon>Duplornaviricota</taxon>
        <taxon>Resentoviricetes</taxon>
        <taxon>Reovirales</taxon>
        <taxon>Sedoreoviridae</taxon>
        <taxon>Rotavirus</taxon>
        <taxon>Rotavirus H</taxon>
    </lineage>
</organism>
<sequence length="1167" mass="132891">MEPENYLAWLARDIVRNLSYTSLVYNNPKVAIVELLDNKEAFFAYEKEQKTPEALINYIDSIVKSSISVEDKIEALLKIRYISVYVDDKSDKRDIVLQLLNRTIKKIELKTKISDELNDAINAITIESKNWKIQNSKSFKPYHYNQLVSDFIKYNEFEVLEGTDPLKWKSDTLQGLSPNYNHRTHTLISSIIYATSVRFDNYNDEQLQVLLYLFSVIRTNYVNGYLEILPNRKWSHSLADLRENKSIMMYSAKIIHASCAMISILHAVPIDYFFLAQIIASFSEIPAHAAKHLSSPMTLYIGIAQLRSNIVVSTKIAAESVATESPNISRLEESQIREWEQEMSEYPFQSSRMVRMMKKNIFDVSVDMFYAIFNCFSATFHVGHRIDNPQDAIEAQVKVEYTSDVDKEMYDQYYFLLKRMLTDQLAEYAEEMYFKYNSDVTAESLAAMANSSNGYSRSVTFLDREIKTTKKMLHLDDDLSKNLNFTNIGDQIKKGIPMGTRNVPARQTRGIFILSWQVAAIQHTIAEFLYKKAKKGGFGATFAEAYVAKAATLTYGILAEATSKADQLILYTDVSQWDASQHNTEPYRSAWINAIKEARTKYKINYNQEPVVLGMNVLDKMIEIQEALLNSNLIVESQGSKRQPLRIKYHGVASGEKTTKIGNSFANVALITTVFNNLTNTMPSIRVNHMRVDGDDNVVTMYTANRIDEVQENIKEKYKRMNAKVKALASYTGLEMAKRFIICGKIFERGAISIFTAERPYGTDLSVQSTTGSLIYSAAVNAYRGFGDNYLNFMTDVLVPPSASVKITGRLRSLLSPVTLYSTGPLSFEITPYGLGGRMRLFSLSKENMELYKILTSSLAISVQPDEIKKYSSTPQFKARVDRMISSVQIAMKSEAKIITSILRDKEEQKTLGVPNVATTKNRQQIEKARKTLSLPKETLPKVTKYYPEEIFHLILRNSTFTIPKLNTMTKVYMNNSANITKLQQQLGVRVSSGIQVHRPVNTLLKLVEKHSPIKISPSDLVLYSKKYDLTNLNGKKQFLIDLGISGNELRFYLNSKLLFHDLLLSKYDKLYESPGFGATQLNALPLDLTAAEKVFSIKLNLPNTYYELLMLILLYEYVNFVMFTGDTFRAVCIPESQTINAKLVKTVMTMIDNIQLDTVMFSDNIY</sequence>
<organismHost>
    <name type="scientific">Homo sapiens</name>
    <name type="common">Human</name>
    <dbReference type="NCBI Taxonomy" id="9606"/>
</organismHost>
<keyword id="KW-0547">Nucleotide-binding</keyword>
<keyword id="KW-0548">Nucleotidyltransferase</keyword>
<keyword id="KW-1185">Reference proteome</keyword>
<keyword id="KW-0694">RNA-binding</keyword>
<keyword id="KW-0696">RNA-directed RNA polymerase</keyword>
<keyword id="KW-0808">Transferase</keyword>
<keyword id="KW-0693">Viral RNA replication</keyword>
<keyword id="KW-0946">Virion</keyword>
<accession>Q45UG0</accession>
<protein>
    <recommendedName>
        <fullName>RNA-directed RNA polymerase</fullName>
        <ecNumber>2.7.7.48</ecNumber>
    </recommendedName>
    <alternativeName>
        <fullName>Protein VP1</fullName>
    </alternativeName>
</protein>
<comment type="function">
    <text evidence="2">RNA-directed RNA polymerase that is involved in both transcription and genome replication. Together with VP3 capping enzyme, forms an enzyme complex positioned near the channels situated at each of the five-fold vertices of the core. Following infection, the outermost layer of the virus is lost, leaving a double-layered particle (DLP) made up of the core and VP6 shell. VP1 then catalyzes the transcription of fully conservative plus-strand genomic RNAs that are extruded through the DLP's channels into the cytoplasm where they function as mRNAs for translation of viral proteins. One copy of each of the viral (+)RNAs is also recruited during core assembly, together with newly synthesized polymerase complexes and VP2. The polymerase of these novo-formed particles catalyzes the synthesis of complementary minus-strands leading to dsDNA formation. To do so, the polymerase specifically recognizes conserved 3' sequence(s) in plus-strand RNA templates. Once dsRNA synthesis is complete, the polymerase switches to the transcriptional mode, thus providing secondary transcription (By similarity).</text>
</comment>
<comment type="catalytic activity">
    <reaction evidence="2">
        <text>RNA(n) + a ribonucleoside 5'-triphosphate = RNA(n+1) + diphosphate</text>
        <dbReference type="Rhea" id="RHEA:21248"/>
        <dbReference type="Rhea" id="RHEA-COMP:14527"/>
        <dbReference type="Rhea" id="RHEA-COMP:17342"/>
        <dbReference type="ChEBI" id="CHEBI:33019"/>
        <dbReference type="ChEBI" id="CHEBI:61557"/>
        <dbReference type="ChEBI" id="CHEBI:140395"/>
        <dbReference type="EC" id="2.7.7.48"/>
    </reaction>
</comment>
<comment type="subunit">
    <text evidence="1 3">Interacts with VP3 (Potential). Interacts with VP2 (Potential). Interacts with NSP5; this interaction is probably necessary for the formation of functional virus factories (By similarity).</text>
</comment>
<comment type="subcellular location">
    <subcellularLocation>
        <location evidence="3">Virion</location>
    </subcellularLocation>
    <text evidence="1">Attached inside the inner capsid as a minor component. Also found in spherical cytoplasmic structures, called virus factories, that appear early after infection and are the site of viral replication and packaging (By similarity).</text>
</comment>
<comment type="similarity">
    <text evidence="3">Belongs to the reoviridae RNA-directed RNA polymerase family.</text>
</comment>
<feature type="chain" id="PRO_0000369831" description="RNA-directed RNA polymerase">
    <location>
        <begin position="1"/>
        <end position="1167"/>
    </location>
</feature>
<feature type="domain" description="RdRp catalytic" evidence="2">
    <location>
        <begin position="553"/>
        <end position="735"/>
    </location>
</feature>
<reference key="1">
    <citation type="journal article" date="2008" name="J. Gen. Virol.">
        <title>Molecular characterization of a novel adult diarrhoea rotavirus strain J19 isolated in China and its significance for the evolution and origin of group B rotaviruses.</title>
        <authorList>
            <person name="Jiang S."/>
            <person name="Ji S."/>
            <person name="Tang Q."/>
            <person name="Cui X."/>
            <person name="Yang H."/>
            <person name="Kan B."/>
            <person name="Gao S."/>
        </authorList>
    </citation>
    <scope>NUCLEOTIDE SEQUENCE [GENOMIC RNA]</scope>
</reference>
<dbReference type="EC" id="2.7.7.48"/>
<dbReference type="EMBL" id="DQ113897">
    <property type="protein sequence ID" value="AAZ03485.1"/>
    <property type="molecule type" value="Genomic_RNA"/>
</dbReference>
<dbReference type="RefSeq" id="YP_392490.1">
    <property type="nucleotide sequence ID" value="NC_007548.1"/>
</dbReference>
<dbReference type="SMR" id="Q45UG0"/>
<dbReference type="GeneID" id="5076650"/>
<dbReference type="KEGG" id="vg:5076650"/>
<dbReference type="OrthoDB" id="934at10239"/>
<dbReference type="Proteomes" id="UP000007663">
    <property type="component" value="Genome"/>
</dbReference>
<dbReference type="GO" id="GO:0044423">
    <property type="term" value="C:virion component"/>
    <property type="evidence" value="ECO:0007669"/>
    <property type="project" value="UniProtKB-KW"/>
</dbReference>
<dbReference type="GO" id="GO:0000166">
    <property type="term" value="F:nucleotide binding"/>
    <property type="evidence" value="ECO:0007669"/>
    <property type="project" value="UniProtKB-KW"/>
</dbReference>
<dbReference type="GO" id="GO:0003723">
    <property type="term" value="F:RNA binding"/>
    <property type="evidence" value="ECO:0007669"/>
    <property type="project" value="UniProtKB-KW"/>
</dbReference>
<dbReference type="GO" id="GO:0003968">
    <property type="term" value="F:RNA-directed RNA polymerase activity"/>
    <property type="evidence" value="ECO:0007669"/>
    <property type="project" value="UniProtKB-KW"/>
</dbReference>
<dbReference type="GO" id="GO:0006351">
    <property type="term" value="P:DNA-templated transcription"/>
    <property type="evidence" value="ECO:0007669"/>
    <property type="project" value="InterPro"/>
</dbReference>
<dbReference type="GO" id="GO:0019079">
    <property type="term" value="P:viral genome replication"/>
    <property type="evidence" value="ECO:0007669"/>
    <property type="project" value="InterPro"/>
</dbReference>
<dbReference type="Gene3D" id="1.10.357.80">
    <property type="match status" value="2"/>
</dbReference>
<dbReference type="Gene3D" id="3.30.70.2480">
    <property type="match status" value="1"/>
</dbReference>
<dbReference type="InterPro" id="IPR043502">
    <property type="entry name" value="DNA/RNA_pol_sf"/>
</dbReference>
<dbReference type="InterPro" id="IPR001795">
    <property type="entry name" value="RNA-dir_pol_luteovirus"/>
</dbReference>
<dbReference type="InterPro" id="IPR007097">
    <property type="entry name" value="RNA-dir_pol_reovirus"/>
</dbReference>
<dbReference type="Pfam" id="PF02123">
    <property type="entry name" value="RdRP_4"/>
    <property type="match status" value="1"/>
</dbReference>
<dbReference type="SUPFAM" id="SSF56672">
    <property type="entry name" value="DNA/RNA polymerases"/>
    <property type="match status" value="1"/>
</dbReference>
<dbReference type="PROSITE" id="PS50523">
    <property type="entry name" value="RDRP_DSRNA_REO"/>
    <property type="match status" value="1"/>
</dbReference>
<name>RDRP_ROTJ1</name>
<evidence type="ECO:0000250" key="1"/>
<evidence type="ECO:0000255" key="2">
    <source>
        <dbReference type="PROSITE-ProRule" id="PRU00539"/>
    </source>
</evidence>
<evidence type="ECO:0000305" key="3"/>